<evidence type="ECO:0000250" key="1"/>
<evidence type="ECO:0000250" key="2">
    <source>
        <dbReference type="UniProtKB" id="P02721"/>
    </source>
</evidence>
<evidence type="ECO:0000250" key="3">
    <source>
        <dbReference type="UniProtKB" id="P18859"/>
    </source>
</evidence>
<evidence type="ECO:0000250" key="4">
    <source>
        <dbReference type="UniProtKB" id="P19483"/>
    </source>
</evidence>
<evidence type="ECO:0000250" key="5">
    <source>
        <dbReference type="UniProtKB" id="P97450"/>
    </source>
</evidence>
<evidence type="ECO:0000305" key="6"/>
<gene>
    <name evidence="3" type="primary">ATP5PF</name>
    <name type="synonym">ATP5J</name>
</gene>
<proteinExistence type="inferred from homology"/>
<name>ATP5J_PONAB</name>
<reference key="1">
    <citation type="submission" date="2004-11" db="EMBL/GenBank/DDBJ databases">
        <authorList>
            <consortium name="The German cDNA consortium"/>
        </authorList>
    </citation>
    <scope>NUCLEOTIDE SEQUENCE [LARGE SCALE MRNA]</scope>
    <source>
        <tissue>Heart</tissue>
    </source>
</reference>
<dbReference type="EMBL" id="CR858499">
    <property type="protein sequence ID" value="CAH90727.1"/>
    <property type="molecule type" value="mRNA"/>
</dbReference>
<dbReference type="RefSeq" id="NP_001125405.1">
    <property type="nucleotide sequence ID" value="NM_001131933.1"/>
</dbReference>
<dbReference type="SMR" id="Q5RBY3"/>
<dbReference type="FunCoup" id="Q5RBY3">
    <property type="interactions" value="1334"/>
</dbReference>
<dbReference type="STRING" id="9601.ENSPPYP00000012627"/>
<dbReference type="Ensembl" id="ENSPPYT00000046854.1">
    <property type="protein sequence ID" value="ENSPPYP00000038049.1"/>
    <property type="gene ID" value="ENSPPYG00000011305.2"/>
</dbReference>
<dbReference type="GeneID" id="100172310"/>
<dbReference type="KEGG" id="pon:100172310"/>
<dbReference type="CTD" id="522"/>
<dbReference type="eggNOG" id="KOG4634">
    <property type="taxonomic scope" value="Eukaryota"/>
</dbReference>
<dbReference type="GeneTree" id="ENSGT00390000008902"/>
<dbReference type="HOGENOM" id="CLU_145649_1_0_1"/>
<dbReference type="InParanoid" id="Q5RBY3"/>
<dbReference type="OrthoDB" id="8902296at2759"/>
<dbReference type="TreeFam" id="TF318998"/>
<dbReference type="Proteomes" id="UP000001595">
    <property type="component" value="Chromosome 21"/>
</dbReference>
<dbReference type="GO" id="GO:0005743">
    <property type="term" value="C:mitochondrial inner membrane"/>
    <property type="evidence" value="ECO:0007669"/>
    <property type="project" value="UniProtKB-SubCell"/>
</dbReference>
<dbReference type="GO" id="GO:0045259">
    <property type="term" value="C:proton-transporting ATP synthase complex"/>
    <property type="evidence" value="ECO:0000250"/>
    <property type="project" value="UniProtKB"/>
</dbReference>
<dbReference type="GO" id="GO:0015078">
    <property type="term" value="F:proton transmembrane transporter activity"/>
    <property type="evidence" value="ECO:0007669"/>
    <property type="project" value="InterPro"/>
</dbReference>
<dbReference type="GO" id="GO:0015986">
    <property type="term" value="P:proton motive force-driven ATP synthesis"/>
    <property type="evidence" value="ECO:0007669"/>
    <property type="project" value="InterPro"/>
</dbReference>
<dbReference type="FunFam" id="1.10.246.110:FF:000001">
    <property type="entry name" value="ATP synthase-coupling factor 6, mitochondrial"/>
    <property type="match status" value="1"/>
</dbReference>
<dbReference type="Gene3D" id="1.10.246.110">
    <property type="entry name" value="Mitochondrial ATP synthase-coupling factor 6"/>
    <property type="match status" value="1"/>
</dbReference>
<dbReference type="InterPro" id="IPR008387">
    <property type="entry name" value="ATP_synth_f6_mt"/>
</dbReference>
<dbReference type="InterPro" id="IPR036204">
    <property type="entry name" value="ATP_synth_f6_sf_mt"/>
</dbReference>
<dbReference type="PANTHER" id="PTHR12441">
    <property type="entry name" value="ATP SYNTHASE COUPLING FACTOR 6, MITOCHONDRIAL"/>
    <property type="match status" value="1"/>
</dbReference>
<dbReference type="PANTHER" id="PTHR12441:SF10">
    <property type="entry name" value="ATP SYNTHASE-COUPLING FACTOR 6, MITOCHONDRIAL"/>
    <property type="match status" value="1"/>
</dbReference>
<dbReference type="Pfam" id="PF05511">
    <property type="entry name" value="ATP-synt_F6"/>
    <property type="match status" value="1"/>
</dbReference>
<dbReference type="PIRSF" id="PIRSF002455">
    <property type="entry name" value="ATP_synthase_coupling_factor_6"/>
    <property type="match status" value="1"/>
</dbReference>
<dbReference type="SUPFAM" id="SSF111357">
    <property type="entry name" value="Mitochondrial ATP synthase coupling factor 6"/>
    <property type="match status" value="1"/>
</dbReference>
<feature type="transit peptide" description="Mitochondrion" evidence="1">
    <location>
        <begin position="1"/>
        <end position="31"/>
    </location>
</feature>
<feature type="chain" id="PRO_0000002530" description="ATP synthase peripheral stalk subunit F6, mitochondrial">
    <location>
        <begin position="32"/>
        <end position="107"/>
    </location>
</feature>
<feature type="modified residue" description="N6-acetyllysine" evidence="3">
    <location>
        <position position="40"/>
    </location>
</feature>
<feature type="modified residue" description="N6-acetyllysine" evidence="3">
    <location>
        <position position="45"/>
    </location>
</feature>
<feature type="modified residue" description="N6-acetyllysine" evidence="5">
    <location>
        <position position="78"/>
    </location>
</feature>
<feature type="modified residue" description="N6-acetyllysine; alternate" evidence="5">
    <location>
        <position position="93"/>
    </location>
</feature>
<feature type="modified residue" description="N6-succinyllysine; alternate" evidence="5">
    <location>
        <position position="93"/>
    </location>
</feature>
<feature type="modified residue" description="N6-acetyllysine; alternate" evidence="3">
    <location>
        <position position="98"/>
    </location>
</feature>
<feature type="modified residue" description="N6-succinyllysine; alternate" evidence="5">
    <location>
        <position position="98"/>
    </location>
</feature>
<feature type="modified residue" description="N6-acetyllysine" evidence="3">
    <location>
        <position position="104"/>
    </location>
</feature>
<keyword id="KW-0007">Acetylation</keyword>
<keyword id="KW-0138">CF(0)</keyword>
<keyword id="KW-0375">Hydrogen ion transport</keyword>
<keyword id="KW-0406">Ion transport</keyword>
<keyword id="KW-0472">Membrane</keyword>
<keyword id="KW-0496">Mitochondrion</keyword>
<keyword id="KW-0999">Mitochondrion inner membrane</keyword>
<keyword id="KW-1185">Reference proteome</keyword>
<keyword id="KW-0809">Transit peptide</keyword>
<keyword id="KW-0813">Transport</keyword>
<organism>
    <name type="scientific">Pongo abelii</name>
    <name type="common">Sumatran orangutan</name>
    <name type="synonym">Pongo pygmaeus abelii</name>
    <dbReference type="NCBI Taxonomy" id="9601"/>
    <lineage>
        <taxon>Eukaryota</taxon>
        <taxon>Metazoa</taxon>
        <taxon>Chordata</taxon>
        <taxon>Craniata</taxon>
        <taxon>Vertebrata</taxon>
        <taxon>Euteleostomi</taxon>
        <taxon>Mammalia</taxon>
        <taxon>Eutheria</taxon>
        <taxon>Euarchontoglires</taxon>
        <taxon>Primates</taxon>
        <taxon>Haplorrhini</taxon>
        <taxon>Catarrhini</taxon>
        <taxon>Hominidae</taxon>
        <taxon>Pongo</taxon>
    </lineage>
</organism>
<protein>
    <recommendedName>
        <fullName evidence="3">ATP synthase peripheral stalk subunit F6, mitochondrial</fullName>
        <shortName>ATPase subunit F6</shortName>
    </recommendedName>
    <alternativeName>
        <fullName evidence="6">ATP synthase peripheral stalk subunit F6</fullName>
    </alternativeName>
</protein>
<comment type="function">
    <text evidence="2 3 4">Subunit F6, of the mitochondrial membrane ATP synthase complex (F(1)F(0) ATP synthase or Complex V) that produces ATP from ADP in the presence of a proton gradient across the membrane which is generated by electron transport complexes of the respiratory chain. ATP synthase complex consist of a soluble F(1) head domain - the catalytic core - and a membrane F(1) domain - the membrane proton channel. These two domains are linked by a central stalk rotating inside the F(1) region and a stationary peripheral stalk. During catalysis, ATP synthesis in the catalytic domain of F(1) is coupled via a rotary mechanism of the central stalk subunits to proton translocation (By similarity). In vivo, can only synthesize ATP although its ATP hydrolase activity can be activated artificially in vitro (By similarity). Part of the complex F(0) domain (By similarity). Part of the complex F(0) domain and the peripheric stalk, which acts as a stator to hold the catalytic alpha(3)beta(3) subcomplex and subunit a/ATP6 static relative to the rotary elements (By similarity).</text>
</comment>
<comment type="subunit">
    <text evidence="3">Component of the ATP synthase complex composed at least of ATP5F1A/subunit alpha, ATP5F1B/subunit beta, ATP5MC1/subunit c (homooctomer), MT-ATP6/subunit a, MT-ATP8/subunit 8, ATP5ME/subunit e, ATP5MF/subunit f, ATP5MG/subunit g, ATP5MK/subunit k, ATP5MJ/subunit j, ATP5F1C/subunit gamma, ATP5F1D/subunit delta, ATP5F1E/subunit epsilon, ATP5PF/subunit F6, ATP5PB/subunit b, ATP5PD/subunit d, ATP5PO/subunit OSCP. ATP synthase complex consists of a soluble F(1) head domain (subunits alpha(3) and beta(3)) - the catalytic core - and a membrane F(0) domain - the membrane proton channel (subunits c, a, 8, e, f, g, k and j). These two domains are linked by a central stalk (subunits gamma, delta, and epsilon) rotating inside the F1 region and a stationary peripheral stalk (subunits F6, b, d, and OSCP).</text>
</comment>
<comment type="subcellular location">
    <subcellularLocation>
        <location>Mitochondrion</location>
    </subcellularLocation>
    <subcellularLocation>
        <location>Mitochondrion inner membrane</location>
    </subcellularLocation>
</comment>
<comment type="similarity">
    <text evidence="6">Belongs to the eukaryotic ATPase subunit F6 family.</text>
</comment>
<sequence length="107" mass="12448">MILQRLFRFSVIRSAVSVYLRRNIGVTAVAFNKELDPIQKLFVDKIREYKSKRQTSGGPVDAGPEYQQELEKELFKLKQMFGNADMNTFPAFKFEDPKFEVIEKPQA</sequence>
<accession>Q5RBY3</accession>